<name>MIAB_XANP2</name>
<sequence length="470" mass="51491">MHEPRKLYVKSFGCQMNVYDSHRMADTLAREGFVETQDPAEADLVILNTCHIREKAAEKVYSELGRLRKQKQEAGSDTMIAVAGCVAQAEGAEIMRRAPVVDLVVGPQSYHRLPELLAEAKAGKRVVDTEFPAEDKFDHLPAPTRAATRSRGPAAFVTVQEGCDKFCTFCVVPYTRGAEVSRPVAKIMDEAARLVDQGVREISLIGQNVNAFHGAGPDGTTWSLARLMEHMARLDGLARLRYTTSHPRDMDDDLIAAHRDLPQLMPYLHLPVQSGSDRILAAMNRKHGRDDFFAIIEKMRQARPDMALSSDFIVGFPGESEKDFEDTLDLVRRVGFASAYSFKYSPRPGTPAADHDAQVPEEVKAERLAELQRLLEASKAAFDESCRGRTFDILLEKPGRQAGQLIGRSPYLQSVVVNDPPAAIGDLLTVTITDVGPNSLAGVPAEASEPSVSQSPVSSARSRPLAAMEA</sequence>
<protein>
    <recommendedName>
        <fullName evidence="1">tRNA-2-methylthio-N(6)-dimethylallyladenosine synthase</fullName>
        <ecNumber evidence="1">2.8.4.3</ecNumber>
    </recommendedName>
    <alternativeName>
        <fullName evidence="1">(Dimethylallyl)adenosine tRNA methylthiotransferase MiaB</fullName>
    </alternativeName>
    <alternativeName>
        <fullName evidence="1">tRNA-i(6)A37 methylthiotransferase</fullName>
    </alternativeName>
</protein>
<reference key="1">
    <citation type="submission" date="2007-07" db="EMBL/GenBank/DDBJ databases">
        <title>Complete sequence of chromosome of Xanthobacter autotrophicus Py2.</title>
        <authorList>
            <consortium name="US DOE Joint Genome Institute"/>
            <person name="Copeland A."/>
            <person name="Lucas S."/>
            <person name="Lapidus A."/>
            <person name="Barry K."/>
            <person name="Glavina del Rio T."/>
            <person name="Hammon N."/>
            <person name="Israni S."/>
            <person name="Dalin E."/>
            <person name="Tice H."/>
            <person name="Pitluck S."/>
            <person name="Sims D."/>
            <person name="Brettin T."/>
            <person name="Bruce D."/>
            <person name="Detter J.C."/>
            <person name="Han C."/>
            <person name="Tapia R."/>
            <person name="Brainard J."/>
            <person name="Schmutz J."/>
            <person name="Larimer F."/>
            <person name="Land M."/>
            <person name="Hauser L."/>
            <person name="Kyrpides N."/>
            <person name="Kim E."/>
            <person name="Ensigns S.A."/>
            <person name="Richardson P."/>
        </authorList>
    </citation>
    <scope>NUCLEOTIDE SEQUENCE [LARGE SCALE GENOMIC DNA]</scope>
    <source>
        <strain>ATCC BAA-1158 / Py2</strain>
    </source>
</reference>
<keyword id="KW-0004">4Fe-4S</keyword>
<keyword id="KW-0963">Cytoplasm</keyword>
<keyword id="KW-0408">Iron</keyword>
<keyword id="KW-0411">Iron-sulfur</keyword>
<keyword id="KW-0479">Metal-binding</keyword>
<keyword id="KW-1185">Reference proteome</keyword>
<keyword id="KW-0949">S-adenosyl-L-methionine</keyword>
<keyword id="KW-0808">Transferase</keyword>
<keyword id="KW-0819">tRNA processing</keyword>
<organism>
    <name type="scientific">Xanthobacter autotrophicus (strain ATCC BAA-1158 / Py2)</name>
    <dbReference type="NCBI Taxonomy" id="78245"/>
    <lineage>
        <taxon>Bacteria</taxon>
        <taxon>Pseudomonadati</taxon>
        <taxon>Pseudomonadota</taxon>
        <taxon>Alphaproteobacteria</taxon>
        <taxon>Hyphomicrobiales</taxon>
        <taxon>Xanthobacteraceae</taxon>
        <taxon>Xanthobacter</taxon>
    </lineage>
</organism>
<accession>A7IGB2</accession>
<dbReference type="EC" id="2.8.4.3" evidence="1"/>
<dbReference type="EMBL" id="CP000781">
    <property type="protein sequence ID" value="ABS67055.1"/>
    <property type="status" value="ALT_INIT"/>
    <property type="molecule type" value="Genomic_DNA"/>
</dbReference>
<dbReference type="SMR" id="A7IGB2"/>
<dbReference type="STRING" id="78245.Xaut_1810"/>
<dbReference type="KEGG" id="xau:Xaut_1810"/>
<dbReference type="eggNOG" id="COG0621">
    <property type="taxonomic scope" value="Bacteria"/>
</dbReference>
<dbReference type="HOGENOM" id="CLU_018697_2_2_5"/>
<dbReference type="OrthoDB" id="9805215at2"/>
<dbReference type="Proteomes" id="UP000002417">
    <property type="component" value="Chromosome"/>
</dbReference>
<dbReference type="GO" id="GO:0005829">
    <property type="term" value="C:cytosol"/>
    <property type="evidence" value="ECO:0007669"/>
    <property type="project" value="TreeGrafter"/>
</dbReference>
<dbReference type="GO" id="GO:0051539">
    <property type="term" value="F:4 iron, 4 sulfur cluster binding"/>
    <property type="evidence" value="ECO:0007669"/>
    <property type="project" value="UniProtKB-UniRule"/>
</dbReference>
<dbReference type="GO" id="GO:0046872">
    <property type="term" value="F:metal ion binding"/>
    <property type="evidence" value="ECO:0007669"/>
    <property type="project" value="UniProtKB-KW"/>
</dbReference>
<dbReference type="GO" id="GO:0035597">
    <property type="term" value="F:N6-isopentenyladenosine methylthiotransferase activity"/>
    <property type="evidence" value="ECO:0007669"/>
    <property type="project" value="TreeGrafter"/>
</dbReference>
<dbReference type="CDD" id="cd01335">
    <property type="entry name" value="Radical_SAM"/>
    <property type="match status" value="1"/>
</dbReference>
<dbReference type="FunFam" id="3.40.50.12160:FF:000003">
    <property type="entry name" value="CDK5 regulatory subunit-associated protein 1"/>
    <property type="match status" value="1"/>
</dbReference>
<dbReference type="FunFam" id="3.80.30.20:FF:000001">
    <property type="entry name" value="tRNA-2-methylthio-N(6)-dimethylallyladenosine synthase 2"/>
    <property type="match status" value="1"/>
</dbReference>
<dbReference type="Gene3D" id="3.40.50.12160">
    <property type="entry name" value="Methylthiotransferase, N-terminal domain"/>
    <property type="match status" value="1"/>
</dbReference>
<dbReference type="Gene3D" id="3.80.30.20">
    <property type="entry name" value="tm_1862 like domain"/>
    <property type="match status" value="1"/>
</dbReference>
<dbReference type="HAMAP" id="MF_01864">
    <property type="entry name" value="tRNA_metthiotr_MiaB"/>
    <property type="match status" value="1"/>
</dbReference>
<dbReference type="InterPro" id="IPR006638">
    <property type="entry name" value="Elp3/MiaA/NifB-like_rSAM"/>
</dbReference>
<dbReference type="InterPro" id="IPR005839">
    <property type="entry name" value="Methylthiotransferase"/>
</dbReference>
<dbReference type="InterPro" id="IPR020612">
    <property type="entry name" value="Methylthiotransferase_CS"/>
</dbReference>
<dbReference type="InterPro" id="IPR013848">
    <property type="entry name" value="Methylthiotransferase_N"/>
</dbReference>
<dbReference type="InterPro" id="IPR038135">
    <property type="entry name" value="Methylthiotransferase_N_sf"/>
</dbReference>
<dbReference type="InterPro" id="IPR006463">
    <property type="entry name" value="MiaB_methiolase"/>
</dbReference>
<dbReference type="InterPro" id="IPR007197">
    <property type="entry name" value="rSAM"/>
</dbReference>
<dbReference type="InterPro" id="IPR023404">
    <property type="entry name" value="rSAM_horseshoe"/>
</dbReference>
<dbReference type="InterPro" id="IPR002792">
    <property type="entry name" value="TRAM_dom"/>
</dbReference>
<dbReference type="NCBIfam" id="TIGR01574">
    <property type="entry name" value="miaB-methiolase"/>
    <property type="match status" value="1"/>
</dbReference>
<dbReference type="NCBIfam" id="TIGR00089">
    <property type="entry name" value="MiaB/RimO family radical SAM methylthiotransferase"/>
    <property type="match status" value="1"/>
</dbReference>
<dbReference type="PANTHER" id="PTHR43020">
    <property type="entry name" value="CDK5 REGULATORY SUBUNIT-ASSOCIATED PROTEIN 1"/>
    <property type="match status" value="1"/>
</dbReference>
<dbReference type="PANTHER" id="PTHR43020:SF2">
    <property type="entry name" value="MITOCHONDRIAL TRNA METHYLTHIOTRANSFERASE CDK5RAP1"/>
    <property type="match status" value="1"/>
</dbReference>
<dbReference type="Pfam" id="PF04055">
    <property type="entry name" value="Radical_SAM"/>
    <property type="match status" value="1"/>
</dbReference>
<dbReference type="Pfam" id="PF01938">
    <property type="entry name" value="TRAM"/>
    <property type="match status" value="1"/>
</dbReference>
<dbReference type="Pfam" id="PF00919">
    <property type="entry name" value="UPF0004"/>
    <property type="match status" value="1"/>
</dbReference>
<dbReference type="SFLD" id="SFLDF00273">
    <property type="entry name" value="(dimethylallyl)adenosine_tRNA"/>
    <property type="match status" value="1"/>
</dbReference>
<dbReference type="SFLD" id="SFLDG01082">
    <property type="entry name" value="B12-binding_domain_containing"/>
    <property type="match status" value="1"/>
</dbReference>
<dbReference type="SFLD" id="SFLDS00029">
    <property type="entry name" value="Radical_SAM"/>
    <property type="match status" value="1"/>
</dbReference>
<dbReference type="SMART" id="SM00729">
    <property type="entry name" value="Elp3"/>
    <property type="match status" value="1"/>
</dbReference>
<dbReference type="SUPFAM" id="SSF102114">
    <property type="entry name" value="Radical SAM enzymes"/>
    <property type="match status" value="1"/>
</dbReference>
<dbReference type="PROSITE" id="PS51449">
    <property type="entry name" value="MTTASE_N"/>
    <property type="match status" value="1"/>
</dbReference>
<dbReference type="PROSITE" id="PS01278">
    <property type="entry name" value="MTTASE_RADICAL"/>
    <property type="match status" value="1"/>
</dbReference>
<dbReference type="PROSITE" id="PS51918">
    <property type="entry name" value="RADICAL_SAM"/>
    <property type="match status" value="1"/>
</dbReference>
<dbReference type="PROSITE" id="PS50926">
    <property type="entry name" value="TRAM"/>
    <property type="match status" value="1"/>
</dbReference>
<comment type="function">
    <text evidence="1">Catalyzes the methylthiolation of N6-(dimethylallyl)adenosine (i(6)A), leading to the formation of 2-methylthio-N6-(dimethylallyl)adenosine (ms(2)i(6)A) at position 37 in tRNAs that read codons beginning with uridine.</text>
</comment>
<comment type="catalytic activity">
    <reaction evidence="1">
        <text>N(6)-dimethylallyladenosine(37) in tRNA + (sulfur carrier)-SH + AH2 + 2 S-adenosyl-L-methionine = 2-methylsulfanyl-N(6)-dimethylallyladenosine(37) in tRNA + (sulfur carrier)-H + 5'-deoxyadenosine + L-methionine + A + S-adenosyl-L-homocysteine + 2 H(+)</text>
        <dbReference type="Rhea" id="RHEA:37067"/>
        <dbReference type="Rhea" id="RHEA-COMP:10375"/>
        <dbReference type="Rhea" id="RHEA-COMP:10376"/>
        <dbReference type="Rhea" id="RHEA-COMP:14737"/>
        <dbReference type="Rhea" id="RHEA-COMP:14739"/>
        <dbReference type="ChEBI" id="CHEBI:13193"/>
        <dbReference type="ChEBI" id="CHEBI:15378"/>
        <dbReference type="ChEBI" id="CHEBI:17319"/>
        <dbReference type="ChEBI" id="CHEBI:17499"/>
        <dbReference type="ChEBI" id="CHEBI:29917"/>
        <dbReference type="ChEBI" id="CHEBI:57844"/>
        <dbReference type="ChEBI" id="CHEBI:57856"/>
        <dbReference type="ChEBI" id="CHEBI:59789"/>
        <dbReference type="ChEBI" id="CHEBI:64428"/>
        <dbReference type="ChEBI" id="CHEBI:74415"/>
        <dbReference type="ChEBI" id="CHEBI:74417"/>
        <dbReference type="EC" id="2.8.4.3"/>
    </reaction>
</comment>
<comment type="cofactor">
    <cofactor evidence="1">
        <name>[4Fe-4S] cluster</name>
        <dbReference type="ChEBI" id="CHEBI:49883"/>
    </cofactor>
    <text evidence="1">Binds 2 [4Fe-4S] clusters. One cluster is coordinated with 3 cysteines and an exchangeable S-adenosyl-L-methionine.</text>
</comment>
<comment type="subunit">
    <text evidence="1">Monomer.</text>
</comment>
<comment type="subcellular location">
    <subcellularLocation>
        <location evidence="1">Cytoplasm</location>
    </subcellularLocation>
</comment>
<comment type="similarity">
    <text evidence="1">Belongs to the methylthiotransferase family. MiaB subfamily.</text>
</comment>
<comment type="sequence caution" evidence="4">
    <conflict type="erroneous initiation">
        <sequence resource="EMBL-CDS" id="ABS67055"/>
    </conflict>
</comment>
<feature type="chain" id="PRO_0000374641" description="tRNA-2-methylthio-N(6)-dimethylallyladenosine synthase">
    <location>
        <begin position="1"/>
        <end position="470"/>
    </location>
</feature>
<feature type="domain" description="MTTase N-terminal" evidence="1">
    <location>
        <begin position="5"/>
        <end position="122"/>
    </location>
</feature>
<feature type="domain" description="Radical SAM core" evidence="2">
    <location>
        <begin position="149"/>
        <end position="383"/>
    </location>
</feature>
<feature type="domain" description="TRAM" evidence="1">
    <location>
        <begin position="384"/>
        <end position="446"/>
    </location>
</feature>
<feature type="region of interest" description="Disordered" evidence="3">
    <location>
        <begin position="439"/>
        <end position="470"/>
    </location>
</feature>
<feature type="compositionally biased region" description="Low complexity" evidence="3">
    <location>
        <begin position="444"/>
        <end position="464"/>
    </location>
</feature>
<feature type="binding site" evidence="1">
    <location>
        <position position="14"/>
    </location>
    <ligand>
        <name>[4Fe-4S] cluster</name>
        <dbReference type="ChEBI" id="CHEBI:49883"/>
        <label>1</label>
    </ligand>
</feature>
<feature type="binding site" evidence="1">
    <location>
        <position position="50"/>
    </location>
    <ligand>
        <name>[4Fe-4S] cluster</name>
        <dbReference type="ChEBI" id="CHEBI:49883"/>
        <label>1</label>
    </ligand>
</feature>
<feature type="binding site" evidence="1">
    <location>
        <position position="85"/>
    </location>
    <ligand>
        <name>[4Fe-4S] cluster</name>
        <dbReference type="ChEBI" id="CHEBI:49883"/>
        <label>1</label>
    </ligand>
</feature>
<feature type="binding site" evidence="1">
    <location>
        <position position="163"/>
    </location>
    <ligand>
        <name>[4Fe-4S] cluster</name>
        <dbReference type="ChEBI" id="CHEBI:49883"/>
        <label>2</label>
        <note>4Fe-4S-S-AdoMet</note>
    </ligand>
</feature>
<feature type="binding site" evidence="1">
    <location>
        <position position="167"/>
    </location>
    <ligand>
        <name>[4Fe-4S] cluster</name>
        <dbReference type="ChEBI" id="CHEBI:49883"/>
        <label>2</label>
        <note>4Fe-4S-S-AdoMet</note>
    </ligand>
</feature>
<feature type="binding site" evidence="1">
    <location>
        <position position="170"/>
    </location>
    <ligand>
        <name>[4Fe-4S] cluster</name>
        <dbReference type="ChEBI" id="CHEBI:49883"/>
        <label>2</label>
        <note>4Fe-4S-S-AdoMet</note>
    </ligand>
</feature>
<proteinExistence type="inferred from homology"/>
<gene>
    <name evidence="1" type="primary">miaB</name>
    <name type="ordered locus">Xaut_1810</name>
</gene>
<evidence type="ECO:0000255" key="1">
    <source>
        <dbReference type="HAMAP-Rule" id="MF_01864"/>
    </source>
</evidence>
<evidence type="ECO:0000255" key="2">
    <source>
        <dbReference type="PROSITE-ProRule" id="PRU01266"/>
    </source>
</evidence>
<evidence type="ECO:0000256" key="3">
    <source>
        <dbReference type="SAM" id="MobiDB-lite"/>
    </source>
</evidence>
<evidence type="ECO:0000305" key="4"/>